<protein>
    <recommendedName>
        <fullName evidence="1">Pyridoxine/pyridoxal/pyridoxamine kinase</fullName>
        <shortName evidence="1">PN/PL/PM kinase</shortName>
        <ecNumber evidence="1">2.7.1.35</ecNumber>
    </recommendedName>
    <alternativeName>
        <fullName evidence="1">B6-vitamer kinase</fullName>
    </alternativeName>
</protein>
<proteinExistence type="inferred from homology"/>
<accession>B5YZW5</accession>
<evidence type="ECO:0000255" key="1">
    <source>
        <dbReference type="HAMAP-Rule" id="MF_01638"/>
    </source>
</evidence>
<keyword id="KW-0067">ATP-binding</keyword>
<keyword id="KW-0418">Kinase</keyword>
<keyword id="KW-0460">Magnesium</keyword>
<keyword id="KW-0479">Metal-binding</keyword>
<keyword id="KW-0547">Nucleotide-binding</keyword>
<keyword id="KW-0808">Transferase</keyword>
<keyword id="KW-0862">Zinc</keyword>
<comment type="function">
    <text evidence="1">B6-vitamer kinase involved in the salvage pathway of pyridoxal 5'-phosphate (PLP). Catalyzes the phosphorylation of pyridoxine (PN), pyridoxal (PL), and pyridoxamine (PM), forming their respective 5'-phosphorylated esters, i.e. PNP, PLP and PMP.</text>
</comment>
<comment type="catalytic activity">
    <reaction evidence="1">
        <text>pyridoxal + ATP = pyridoxal 5'-phosphate + ADP + H(+)</text>
        <dbReference type="Rhea" id="RHEA:10224"/>
        <dbReference type="ChEBI" id="CHEBI:15378"/>
        <dbReference type="ChEBI" id="CHEBI:17310"/>
        <dbReference type="ChEBI" id="CHEBI:30616"/>
        <dbReference type="ChEBI" id="CHEBI:456216"/>
        <dbReference type="ChEBI" id="CHEBI:597326"/>
        <dbReference type="EC" id="2.7.1.35"/>
    </reaction>
</comment>
<comment type="catalytic activity">
    <reaction evidence="1">
        <text>pyridoxine + ATP = pyridoxine 5'-phosphate + ADP + H(+)</text>
        <dbReference type="Rhea" id="RHEA:25108"/>
        <dbReference type="ChEBI" id="CHEBI:15378"/>
        <dbReference type="ChEBI" id="CHEBI:16709"/>
        <dbReference type="ChEBI" id="CHEBI:30616"/>
        <dbReference type="ChEBI" id="CHEBI:58589"/>
        <dbReference type="ChEBI" id="CHEBI:456216"/>
        <dbReference type="EC" id="2.7.1.35"/>
    </reaction>
</comment>
<comment type="catalytic activity">
    <reaction evidence="1">
        <text>pyridoxamine + ATP = pyridoxamine 5'-phosphate + ADP + H(+)</text>
        <dbReference type="Rhea" id="RHEA:25104"/>
        <dbReference type="ChEBI" id="CHEBI:15378"/>
        <dbReference type="ChEBI" id="CHEBI:30616"/>
        <dbReference type="ChEBI" id="CHEBI:57761"/>
        <dbReference type="ChEBI" id="CHEBI:58451"/>
        <dbReference type="ChEBI" id="CHEBI:456216"/>
        <dbReference type="EC" id="2.7.1.35"/>
    </reaction>
</comment>
<comment type="cofactor">
    <cofactor evidence="1">
        <name>Mg(2+)</name>
        <dbReference type="ChEBI" id="CHEBI:18420"/>
    </cofactor>
</comment>
<comment type="pathway">
    <text evidence="1">Cofactor metabolism; pyridoxal 5'-phosphate salvage; pyridoxal 5'-phosphate from pyridoxal: step 1/1.</text>
</comment>
<comment type="pathway">
    <text evidence="1">Cofactor metabolism; pyridoxal 5'-phosphate salvage; pyridoxine 5'-phosphate from pyridoxine: step 1/1.</text>
</comment>
<comment type="pathway">
    <text evidence="1">Cofactor metabolism; pyridoxal 5'-phosphate salvage; pyridoxamine 5'-phosphate from pyridoxamine: step 1/1.</text>
</comment>
<comment type="subunit">
    <text evidence="1">Homodimer.</text>
</comment>
<comment type="similarity">
    <text evidence="1">Belongs to the pyridoxine kinase family. PdxK subfamily.</text>
</comment>
<organism>
    <name type="scientific">Escherichia coli O157:H7 (strain EC4115 / EHEC)</name>
    <dbReference type="NCBI Taxonomy" id="444450"/>
    <lineage>
        <taxon>Bacteria</taxon>
        <taxon>Pseudomonadati</taxon>
        <taxon>Pseudomonadota</taxon>
        <taxon>Gammaproteobacteria</taxon>
        <taxon>Enterobacterales</taxon>
        <taxon>Enterobacteriaceae</taxon>
        <taxon>Escherichia</taxon>
    </lineage>
</organism>
<feature type="chain" id="PRO_1000186801" description="Pyridoxine/pyridoxal/pyridoxamine kinase">
    <location>
        <begin position="1"/>
        <end position="283"/>
    </location>
</feature>
<feature type="binding site" evidence="1">
    <location>
        <position position="23"/>
    </location>
    <ligand>
        <name>substrate</name>
    </ligand>
</feature>
<feature type="binding site" evidence="1">
    <location>
        <position position="59"/>
    </location>
    <ligand>
        <name>substrate</name>
    </ligand>
</feature>
<feature type="binding site" evidence="1">
    <location>
        <position position="125"/>
    </location>
    <ligand>
        <name>ATP</name>
        <dbReference type="ChEBI" id="CHEBI:30616"/>
    </ligand>
</feature>
<feature type="binding site" evidence="1">
    <location>
        <position position="136"/>
    </location>
    <ligand>
        <name>Mg(2+)</name>
        <dbReference type="ChEBI" id="CHEBI:18420"/>
    </ligand>
</feature>
<feature type="binding site" evidence="1">
    <location>
        <position position="157"/>
    </location>
    <ligand>
        <name>ATP</name>
        <dbReference type="ChEBI" id="CHEBI:30616"/>
    </ligand>
</feature>
<feature type="binding site" evidence="1">
    <location>
        <position position="162"/>
    </location>
    <ligand>
        <name>ATP</name>
        <dbReference type="ChEBI" id="CHEBI:30616"/>
    </ligand>
</feature>
<feature type="binding site" evidence="1">
    <location>
        <position position="162"/>
    </location>
    <ligand>
        <name>Mg(2+)</name>
        <dbReference type="ChEBI" id="CHEBI:18420"/>
    </ligand>
</feature>
<feature type="binding site" evidence="1">
    <location>
        <position position="195"/>
    </location>
    <ligand>
        <name>ATP</name>
        <dbReference type="ChEBI" id="CHEBI:30616"/>
    </ligand>
</feature>
<feature type="binding site" evidence="1">
    <location>
        <begin position="221"/>
        <end position="224"/>
    </location>
    <ligand>
        <name>ATP</name>
        <dbReference type="ChEBI" id="CHEBI:30616"/>
    </ligand>
</feature>
<feature type="binding site" evidence="1">
    <location>
        <position position="231"/>
    </location>
    <ligand>
        <name>ATP</name>
        <dbReference type="ChEBI" id="CHEBI:30616"/>
    </ligand>
</feature>
<feature type="binding site" evidence="1">
    <location>
        <position position="233"/>
    </location>
    <ligand>
        <name>substrate</name>
    </ligand>
</feature>
<gene>
    <name evidence="1" type="primary">pdxK</name>
    <name type="ordered locus">ECH74115_3649</name>
</gene>
<name>PDXK_ECO5E</name>
<dbReference type="EC" id="2.7.1.35" evidence="1"/>
<dbReference type="EMBL" id="CP001164">
    <property type="protein sequence ID" value="ACI34790.1"/>
    <property type="molecule type" value="Genomic_DNA"/>
</dbReference>
<dbReference type="RefSeq" id="WP_000096648.1">
    <property type="nucleotide sequence ID" value="NC_011353.1"/>
</dbReference>
<dbReference type="SMR" id="B5YZW5"/>
<dbReference type="KEGG" id="ecf:ECH74115_3649"/>
<dbReference type="HOGENOM" id="CLU_046496_3_1_6"/>
<dbReference type="UniPathway" id="UPA01068">
    <property type="reaction ID" value="UER00298"/>
</dbReference>
<dbReference type="UniPathway" id="UPA01068">
    <property type="reaction ID" value="UER00299"/>
</dbReference>
<dbReference type="UniPathway" id="UPA01068">
    <property type="reaction ID" value="UER00300"/>
</dbReference>
<dbReference type="GO" id="GO:0005829">
    <property type="term" value="C:cytosol"/>
    <property type="evidence" value="ECO:0007669"/>
    <property type="project" value="TreeGrafter"/>
</dbReference>
<dbReference type="GO" id="GO:0005524">
    <property type="term" value="F:ATP binding"/>
    <property type="evidence" value="ECO:0007669"/>
    <property type="project" value="UniProtKB-UniRule"/>
</dbReference>
<dbReference type="GO" id="GO:0008902">
    <property type="term" value="F:hydroxymethylpyrimidine kinase activity"/>
    <property type="evidence" value="ECO:0007669"/>
    <property type="project" value="TreeGrafter"/>
</dbReference>
<dbReference type="GO" id="GO:0000287">
    <property type="term" value="F:magnesium ion binding"/>
    <property type="evidence" value="ECO:0007669"/>
    <property type="project" value="UniProtKB-UniRule"/>
</dbReference>
<dbReference type="GO" id="GO:0008478">
    <property type="term" value="F:pyridoxal kinase activity"/>
    <property type="evidence" value="ECO:0007669"/>
    <property type="project" value="UniProtKB-UniRule"/>
</dbReference>
<dbReference type="GO" id="GO:0008270">
    <property type="term" value="F:zinc ion binding"/>
    <property type="evidence" value="ECO:0007669"/>
    <property type="project" value="UniProtKB-UniRule"/>
</dbReference>
<dbReference type="GO" id="GO:0009443">
    <property type="term" value="P:pyridoxal 5'-phosphate salvage"/>
    <property type="evidence" value="ECO:0007669"/>
    <property type="project" value="UniProtKB-UniRule"/>
</dbReference>
<dbReference type="CDD" id="cd01173">
    <property type="entry name" value="pyridoxal_pyridoxamine_kinase"/>
    <property type="match status" value="1"/>
</dbReference>
<dbReference type="FunFam" id="3.40.1190.20:FF:000009">
    <property type="entry name" value="Pyridoxine/pyridoxal/pyridoxamine kinase"/>
    <property type="match status" value="1"/>
</dbReference>
<dbReference type="Gene3D" id="3.40.1190.20">
    <property type="match status" value="1"/>
</dbReference>
<dbReference type="HAMAP" id="MF_01638">
    <property type="entry name" value="PdxK"/>
    <property type="match status" value="1"/>
</dbReference>
<dbReference type="InterPro" id="IPR023479">
    <property type="entry name" value="PdxK"/>
</dbReference>
<dbReference type="InterPro" id="IPR013749">
    <property type="entry name" value="PM/HMP-P_kinase-1"/>
</dbReference>
<dbReference type="InterPro" id="IPR004625">
    <property type="entry name" value="PyrdxlKinase"/>
</dbReference>
<dbReference type="InterPro" id="IPR029056">
    <property type="entry name" value="Ribokinase-like"/>
</dbReference>
<dbReference type="NCBIfam" id="NF006034">
    <property type="entry name" value="PRK08176.1"/>
    <property type="match status" value="1"/>
</dbReference>
<dbReference type="NCBIfam" id="TIGR00687">
    <property type="entry name" value="pyridox_kin"/>
    <property type="match status" value="1"/>
</dbReference>
<dbReference type="PANTHER" id="PTHR10534">
    <property type="entry name" value="PYRIDOXAL KINASE"/>
    <property type="match status" value="1"/>
</dbReference>
<dbReference type="PANTHER" id="PTHR10534:SF15">
    <property type="entry name" value="PYRIDOXINE_PYRIDOXAL_PYRIDOXAMINE KINASE"/>
    <property type="match status" value="1"/>
</dbReference>
<dbReference type="Pfam" id="PF08543">
    <property type="entry name" value="Phos_pyr_kin"/>
    <property type="match status" value="1"/>
</dbReference>
<dbReference type="SUPFAM" id="SSF53613">
    <property type="entry name" value="Ribokinase-like"/>
    <property type="match status" value="1"/>
</dbReference>
<reference key="1">
    <citation type="journal article" date="2011" name="Proc. Natl. Acad. Sci. U.S.A.">
        <title>Genomic anatomy of Escherichia coli O157:H7 outbreaks.</title>
        <authorList>
            <person name="Eppinger M."/>
            <person name="Mammel M.K."/>
            <person name="Leclerc J.E."/>
            <person name="Ravel J."/>
            <person name="Cebula T.A."/>
        </authorList>
    </citation>
    <scope>NUCLEOTIDE SEQUENCE [LARGE SCALE GENOMIC DNA]</scope>
    <source>
        <strain>EC4115 / EHEC</strain>
    </source>
</reference>
<sequence length="283" mass="30859">MSSLLLFNDKSRALQADIVAVQSQVVYGSVGNSIAVPAIKQNGLNVFAVPTVLLSNTPHYDTFYGGAIPDEWFSGYLRALQERDALRQLRAVTTGYMGTASQIKILAEWLTALRKDHPDLLIMVDPVIGDIDSGIYVKPDLPEAYRQYLLPLAQGITPNIFELEILTGKNCRDLDSAIAAAKSLLSDTLKWVVITSASGNEENQEMLVVVVTADSVNVISHSRVKTDLKGTGDLFCAQLISGLLKGKALNDAVHRAGLRVLEVMRYTQQHESDELILPPLAEA</sequence>